<sequence length="274" mass="31647">WIMGHMVNAIEQVDEFLNLGANAIEFDIDLDKGGIAQITHHGIPCDCGRKCTKKAIFTEYLDNIRQVTTPDDPKFREQLVLLALDLKLQRISSAKAYRAGEDVAKKLLDHYWQRGNSRARAYILLNIPLVEDYEFIRAFKDTLKNEGYESYNDKVGINFTGNEDLDKICDVLEILGFHKQVWQADGITSCFARGTERLKEALEKRDTPGYNYINKVYAWTLVRKSIMRRTLRLGVDGVMSNNPDRVIKVLKEKEFADKFRLATYNDNPWEKFRG</sequence>
<organism>
    <name type="scientific">Sicarius cf. damarensis (strain GJB-2008)</name>
    <name type="common">Six-eyed sand spider</name>
    <dbReference type="NCBI Taxonomy" id="575956"/>
    <lineage>
        <taxon>Eukaryota</taxon>
        <taxon>Metazoa</taxon>
        <taxon>Ecdysozoa</taxon>
        <taxon>Arthropoda</taxon>
        <taxon>Chelicerata</taxon>
        <taxon>Arachnida</taxon>
        <taxon>Araneae</taxon>
        <taxon>Araneomorphae</taxon>
        <taxon>Haplogynae</taxon>
        <taxon>Scytodoidea</taxon>
        <taxon>Sicariidae</taxon>
        <taxon>Sicarius</taxon>
    </lineage>
</organism>
<accession>C0JB74</accession>
<comment type="function">
    <text evidence="1 3">Dermonecrotic toxins cleave the phosphodiester linkage between the phosphate and headgroup of certain phospholipids (sphingolipid and lysolipid substrates), forming an alcohol (often choline) and a cyclic phosphate (By similarity). This toxin acts on sphingomyelin (SM) (By similarity). It may also act on ceramide phosphoethanolamine (CPE), lysophosphatidylcholine (LPC) and lysophosphatidylethanolamine (LPE), but not on lysophosphatidylserine (LPS), and lysophosphatidylglycerol (LPG) (By similarity). It acts by transphosphatidylation, releasing exclusively cyclic phosphate products as second products (By similarity). Induces dermonecrosis, hemolysis, increased vascular permeability, edema, inflammatory response, and platelet aggregation (By similarity).</text>
</comment>
<comment type="catalytic activity">
    <reaction evidence="1">
        <text>an N-(acyl)-sphingosylphosphocholine = an N-(acyl)-sphingosyl-1,3-cyclic phosphate + choline</text>
        <dbReference type="Rhea" id="RHEA:60652"/>
        <dbReference type="ChEBI" id="CHEBI:15354"/>
        <dbReference type="ChEBI" id="CHEBI:64583"/>
        <dbReference type="ChEBI" id="CHEBI:143892"/>
    </reaction>
</comment>
<comment type="catalytic activity">
    <reaction evidence="1">
        <text>an N-(acyl)-sphingosylphosphoethanolamine = an N-(acyl)-sphingosyl-1,3-cyclic phosphate + ethanolamine</text>
        <dbReference type="Rhea" id="RHEA:60648"/>
        <dbReference type="ChEBI" id="CHEBI:57603"/>
        <dbReference type="ChEBI" id="CHEBI:143891"/>
        <dbReference type="ChEBI" id="CHEBI:143892"/>
    </reaction>
</comment>
<comment type="catalytic activity">
    <reaction evidence="1">
        <text>a 1-acyl-sn-glycero-3-phosphocholine = a 1-acyl-sn-glycero-2,3-cyclic phosphate + choline</text>
        <dbReference type="Rhea" id="RHEA:60700"/>
        <dbReference type="ChEBI" id="CHEBI:15354"/>
        <dbReference type="ChEBI" id="CHEBI:58168"/>
        <dbReference type="ChEBI" id="CHEBI:143947"/>
    </reaction>
</comment>
<comment type="catalytic activity">
    <reaction evidence="1">
        <text>a 1-acyl-sn-glycero-3-phosphoethanolamine = a 1-acyl-sn-glycero-2,3-cyclic phosphate + ethanolamine</text>
        <dbReference type="Rhea" id="RHEA:60704"/>
        <dbReference type="ChEBI" id="CHEBI:57603"/>
        <dbReference type="ChEBI" id="CHEBI:64381"/>
        <dbReference type="ChEBI" id="CHEBI:143947"/>
    </reaction>
</comment>
<comment type="cofactor">
    <cofactor evidence="5">
        <name>Mg(2+)</name>
        <dbReference type="ChEBI" id="CHEBI:18420"/>
    </cofactor>
    <text evidence="5">Binds 1 Mg(2+) ion per subunit.</text>
</comment>
<comment type="subcellular location">
    <subcellularLocation>
        <location evidence="8">Secreted</location>
    </subcellularLocation>
</comment>
<comment type="tissue specificity">
    <text evidence="8">Expressed by the venom gland.</text>
</comment>
<comment type="similarity">
    <text evidence="7">Belongs to the arthropod phospholipase D family. Class II subfamily.</text>
</comment>
<comment type="caution">
    <text evidence="1 2 4">The most common activity assay for dermonecrotic toxins detects enzymatic activity by monitoring choline release from substrate. Liberation of choline from sphingomyelin (SM) or lysophosphatidylcholine (LPC) is commonly assumed to result from substrate hydrolysis, giving either ceramide-1-phosphate (C1P) or lysophosphatidic acid (LPA), respectively, as a second product. However, two studies from Lajoie and colleagues (2013 and 2015) report the observation of exclusive formation of cyclic phosphate products as second products, resulting from intramolecular transphosphatidylation. Cyclic phosphates have vastly different biological properties from their monoester counterparts, and they may be relevant to the pathology of brown spider envenomation.</text>
</comment>
<feature type="chain" id="PRO_0000392889" description="Dermonecrotic toxin SdSicTox-betaIIB1biv">
    <location>
        <begin position="1" status="less than"/>
        <end position="274"/>
    </location>
</feature>
<feature type="active site" evidence="5">
    <location>
        <position position="5"/>
    </location>
</feature>
<feature type="active site" description="Nucleophile" evidence="5">
    <location>
        <position position="41"/>
    </location>
</feature>
<feature type="binding site" evidence="5">
    <location>
        <position position="25"/>
    </location>
    <ligand>
        <name>Mg(2+)</name>
        <dbReference type="ChEBI" id="CHEBI:18420"/>
    </ligand>
</feature>
<feature type="binding site" evidence="5">
    <location>
        <position position="27"/>
    </location>
    <ligand>
        <name>Mg(2+)</name>
        <dbReference type="ChEBI" id="CHEBI:18420"/>
    </ligand>
</feature>
<feature type="binding site" evidence="5">
    <location>
        <position position="85"/>
    </location>
    <ligand>
        <name>Mg(2+)</name>
        <dbReference type="ChEBI" id="CHEBI:18420"/>
    </ligand>
</feature>
<feature type="disulfide bond" evidence="3">
    <location>
        <begin position="45"/>
        <end position="51"/>
    </location>
</feature>
<feature type="disulfide bond" evidence="3">
    <location>
        <begin position="47"/>
        <end position="190"/>
    </location>
</feature>
<feature type="non-terminal residue">
    <location>
        <position position="1"/>
    </location>
</feature>
<dbReference type="EC" id="4.6.1.-" evidence="4"/>
<dbReference type="EMBL" id="FJ171509">
    <property type="protein sequence ID" value="ACN49005.1"/>
    <property type="molecule type" value="mRNA"/>
</dbReference>
<dbReference type="SMR" id="C0JB74"/>
<dbReference type="GO" id="GO:0005576">
    <property type="term" value="C:extracellular region"/>
    <property type="evidence" value="ECO:0007669"/>
    <property type="project" value="UniProtKB-SubCell"/>
</dbReference>
<dbReference type="GO" id="GO:0016829">
    <property type="term" value="F:lyase activity"/>
    <property type="evidence" value="ECO:0007669"/>
    <property type="project" value="UniProtKB-KW"/>
</dbReference>
<dbReference type="GO" id="GO:0046872">
    <property type="term" value="F:metal ion binding"/>
    <property type="evidence" value="ECO:0007669"/>
    <property type="project" value="UniProtKB-KW"/>
</dbReference>
<dbReference type="GO" id="GO:0008081">
    <property type="term" value="F:phosphoric diester hydrolase activity"/>
    <property type="evidence" value="ECO:0007669"/>
    <property type="project" value="InterPro"/>
</dbReference>
<dbReference type="GO" id="GO:0090729">
    <property type="term" value="F:toxin activity"/>
    <property type="evidence" value="ECO:0007669"/>
    <property type="project" value="UniProtKB-KW"/>
</dbReference>
<dbReference type="GO" id="GO:0031640">
    <property type="term" value="P:killing of cells of another organism"/>
    <property type="evidence" value="ECO:0007669"/>
    <property type="project" value="UniProtKB-KW"/>
</dbReference>
<dbReference type="GO" id="GO:0016042">
    <property type="term" value="P:lipid catabolic process"/>
    <property type="evidence" value="ECO:0007669"/>
    <property type="project" value="UniProtKB-KW"/>
</dbReference>
<dbReference type="CDD" id="cd08576">
    <property type="entry name" value="GDPD_like_SMaseD_PLD"/>
    <property type="match status" value="1"/>
</dbReference>
<dbReference type="Gene3D" id="3.20.20.190">
    <property type="entry name" value="Phosphatidylinositol (PI) phosphodiesterase"/>
    <property type="match status" value="1"/>
</dbReference>
<dbReference type="InterPro" id="IPR017946">
    <property type="entry name" value="PLC-like_Pdiesterase_TIM-brl"/>
</dbReference>
<dbReference type="SUPFAM" id="SSF51695">
    <property type="entry name" value="PLC-like phosphodiesterases"/>
    <property type="match status" value="1"/>
</dbReference>
<evidence type="ECO:0000250" key="1">
    <source>
        <dbReference type="UniProtKB" id="A0A0D4WTV1"/>
    </source>
</evidence>
<evidence type="ECO:0000250" key="2">
    <source>
        <dbReference type="UniProtKB" id="A0A0D4WV12"/>
    </source>
</evidence>
<evidence type="ECO:0000250" key="3">
    <source>
        <dbReference type="UniProtKB" id="P0CE80"/>
    </source>
</evidence>
<evidence type="ECO:0000250" key="4">
    <source>
        <dbReference type="UniProtKB" id="Q4ZFU2"/>
    </source>
</evidence>
<evidence type="ECO:0000250" key="5">
    <source>
        <dbReference type="UniProtKB" id="Q8I914"/>
    </source>
</evidence>
<evidence type="ECO:0000303" key="6">
    <source>
    </source>
</evidence>
<evidence type="ECO:0000305" key="7"/>
<evidence type="ECO:0000305" key="8">
    <source>
    </source>
</evidence>
<proteinExistence type="evidence at transcript level"/>
<name>B2KB4_SICCD</name>
<protein>
    <recommendedName>
        <fullName evidence="6">Dermonecrotic toxin SdSicTox-betaIIB1biv</fullName>
        <ecNumber evidence="4">4.6.1.-</ecNumber>
    </recommendedName>
    <alternativeName>
        <fullName>Phospholipase D</fullName>
        <shortName>PLD</shortName>
    </alternativeName>
    <alternativeName>
        <fullName>Sphingomyelin phosphodiesterase D</fullName>
        <shortName>SMD</shortName>
        <shortName>SMase D</shortName>
        <shortName>Sphingomyelinase D</shortName>
    </alternativeName>
</protein>
<reference key="1">
    <citation type="journal article" date="2009" name="Mol. Biol. Evol.">
        <title>Molecular evolution, functional variation, and proposed nomenclature of the gene family that includes sphingomyelinase D in sicariid spider venoms.</title>
        <authorList>
            <person name="Binford G.J."/>
            <person name="Bodner M.R."/>
            <person name="Cordes M.H."/>
            <person name="Baldwin K.L."/>
            <person name="Rynerson M.R."/>
            <person name="Burns S.N."/>
            <person name="Zobel-Thropp P.A."/>
        </authorList>
    </citation>
    <scope>NUCLEOTIDE SEQUENCE [MRNA]</scope>
    <scope>NOMENCLATURE</scope>
    <source>
        <tissue>Venom gland</tissue>
    </source>
</reference>
<keyword id="KW-0204">Cytolysis</keyword>
<keyword id="KW-1061">Dermonecrotic toxin</keyword>
<keyword id="KW-1015">Disulfide bond</keyword>
<keyword id="KW-0354">Hemolysis</keyword>
<keyword id="KW-0442">Lipid degradation</keyword>
<keyword id="KW-0443">Lipid metabolism</keyword>
<keyword id="KW-0456">Lyase</keyword>
<keyword id="KW-0460">Magnesium</keyword>
<keyword id="KW-0479">Metal-binding</keyword>
<keyword id="KW-0964">Secreted</keyword>
<keyword id="KW-0800">Toxin</keyword>